<proteinExistence type="inferred from homology"/>
<evidence type="ECO:0000255" key="1">
    <source>
        <dbReference type="HAMAP-Rule" id="MF_00465"/>
    </source>
</evidence>
<accession>Q7N893</accession>
<name>SPED_PHOLL</name>
<reference key="1">
    <citation type="journal article" date="2003" name="Nat. Biotechnol.">
        <title>The genome sequence of the entomopathogenic bacterium Photorhabdus luminescens.</title>
        <authorList>
            <person name="Duchaud E."/>
            <person name="Rusniok C."/>
            <person name="Frangeul L."/>
            <person name="Buchrieser C."/>
            <person name="Givaudan A."/>
            <person name="Taourit S."/>
            <person name="Bocs S."/>
            <person name="Boursaux-Eude C."/>
            <person name="Chandler M."/>
            <person name="Charles J.-F."/>
            <person name="Dassa E."/>
            <person name="Derose R."/>
            <person name="Derzelle S."/>
            <person name="Freyssinet G."/>
            <person name="Gaudriault S."/>
            <person name="Medigue C."/>
            <person name="Lanois A."/>
            <person name="Powell K."/>
            <person name="Siguier P."/>
            <person name="Vincent R."/>
            <person name="Wingate V."/>
            <person name="Zouine M."/>
            <person name="Glaser P."/>
            <person name="Boemare N."/>
            <person name="Danchin A."/>
            <person name="Kunst F."/>
        </authorList>
    </citation>
    <scope>NUCLEOTIDE SEQUENCE [LARGE SCALE GENOMIC DNA]</scope>
    <source>
        <strain>DSM 15139 / CIP 105565 / TT01</strain>
    </source>
</reference>
<keyword id="KW-0068">Autocatalytic cleavage</keyword>
<keyword id="KW-0210">Decarboxylase</keyword>
<keyword id="KW-0456">Lyase</keyword>
<keyword id="KW-0620">Polyamine biosynthesis</keyword>
<keyword id="KW-0670">Pyruvate</keyword>
<keyword id="KW-1185">Reference proteome</keyword>
<keyword id="KW-0949">S-adenosyl-L-methionine</keyword>
<keyword id="KW-0704">Schiff base</keyword>
<keyword id="KW-0745">Spermidine biosynthesis</keyword>
<keyword id="KW-0865">Zymogen</keyword>
<comment type="function">
    <text evidence="1">Catalyzes the decarboxylation of S-adenosylmethionine to S-adenosylmethioninamine (dcAdoMet), the propylamine donor required for the synthesis of the polyamines spermine and spermidine from the diamine putrescine.</text>
</comment>
<comment type="catalytic activity">
    <reaction evidence="1">
        <text>S-adenosyl-L-methionine + H(+) = S-adenosyl 3-(methylsulfanyl)propylamine + CO2</text>
        <dbReference type="Rhea" id="RHEA:15981"/>
        <dbReference type="ChEBI" id="CHEBI:15378"/>
        <dbReference type="ChEBI" id="CHEBI:16526"/>
        <dbReference type="ChEBI" id="CHEBI:57443"/>
        <dbReference type="ChEBI" id="CHEBI:59789"/>
        <dbReference type="EC" id="4.1.1.50"/>
    </reaction>
</comment>
<comment type="cofactor">
    <cofactor evidence="1">
        <name>pyruvate</name>
        <dbReference type="ChEBI" id="CHEBI:15361"/>
    </cofactor>
    <text evidence="1">Binds 1 pyruvoyl group covalently per subunit.</text>
</comment>
<comment type="pathway">
    <text evidence="1">Amine and polyamine biosynthesis; S-adenosylmethioninamine biosynthesis; S-adenosylmethioninamine from S-adenosyl-L-methionine: step 1/1.</text>
</comment>
<comment type="subunit">
    <text evidence="1">Heterooctamer of four alpha and four beta chains arranged as a tetramer of alpha/beta heterodimers.</text>
</comment>
<comment type="PTM">
    <text evidence="1">Is synthesized initially as an inactive proenzyme. Formation of the active enzyme involves a self-maturation process in which the active site pyruvoyl group is generated from an internal serine residue via an autocatalytic post-translational modification. Two non-identical subunits are generated from the proenzyme in this reaction, and the pyruvate is formed at the N-terminus of the alpha chain, which is derived from the carboxyl end of the proenzyme. The post-translation cleavage follows an unusual pathway, termed non-hydrolytic serinolysis, in which the side chain hydroxyl group of the serine supplies its oxygen atom to form the C-terminus of the beta chain, while the remainder of the serine residue undergoes an oxidative deamination to produce ammonia and the pyruvoyl group blocking the N-terminus of the alpha chain.</text>
</comment>
<comment type="similarity">
    <text evidence="1">Belongs to the prokaryotic AdoMetDC family. Type 2 subfamily.</text>
</comment>
<sequence length="264" mass="30318">MHKLKLHGFNNLTKSLSFCIYDICYAKSQADRDSYIAYIDEQYNANRLTEILSETCSIIGANILNIARQDYDPQGASVTILVSEEPMDPKDVDNTENPGPLPDSVVAHLDKSHICVHTYPESHPGGGICTFRADIEVSTCGVISPLKALNYLIHKLESDIVTMDYRVRGFTRDVNGMKHYIDHEISSIQNYMTEEVQSQYYMMDVNIYQENLFHTKMMLKRFDLNDYLFNATPEQLSEAEKQEITHLLKKEIQEIYYGRNLPTV</sequence>
<protein>
    <recommendedName>
        <fullName evidence="1">S-adenosylmethionine decarboxylase proenzyme</fullName>
        <shortName evidence="1">AdoMetDC</shortName>
        <shortName evidence="1">SAMDC</shortName>
        <ecNumber evidence="1">4.1.1.50</ecNumber>
    </recommendedName>
    <component>
        <recommendedName>
            <fullName evidence="1">S-adenosylmethionine decarboxylase beta chain</fullName>
        </recommendedName>
    </component>
    <component>
        <recommendedName>
            <fullName evidence="1">S-adenosylmethionine decarboxylase alpha chain</fullName>
        </recommendedName>
    </component>
</protein>
<dbReference type="EC" id="4.1.1.50" evidence="1"/>
<dbReference type="EMBL" id="BX571861">
    <property type="protein sequence ID" value="CAE13137.1"/>
    <property type="molecule type" value="Genomic_DNA"/>
</dbReference>
<dbReference type="RefSeq" id="WP_011145214.1">
    <property type="nucleotide sequence ID" value="NC_005126.1"/>
</dbReference>
<dbReference type="SMR" id="Q7N893"/>
<dbReference type="STRING" id="243265.plu0842"/>
<dbReference type="GeneID" id="48847133"/>
<dbReference type="KEGG" id="plu:plu0842"/>
<dbReference type="eggNOG" id="COG1586">
    <property type="taxonomic scope" value="Bacteria"/>
</dbReference>
<dbReference type="HOGENOM" id="CLU_092007_0_0_6"/>
<dbReference type="OrthoDB" id="5290709at2"/>
<dbReference type="UniPathway" id="UPA00331">
    <property type="reaction ID" value="UER00451"/>
</dbReference>
<dbReference type="Proteomes" id="UP000002514">
    <property type="component" value="Chromosome"/>
</dbReference>
<dbReference type="GO" id="GO:0005829">
    <property type="term" value="C:cytosol"/>
    <property type="evidence" value="ECO:0007669"/>
    <property type="project" value="TreeGrafter"/>
</dbReference>
<dbReference type="GO" id="GO:0004014">
    <property type="term" value="F:adenosylmethionine decarboxylase activity"/>
    <property type="evidence" value="ECO:0007669"/>
    <property type="project" value="UniProtKB-UniRule"/>
</dbReference>
<dbReference type="GO" id="GO:0008295">
    <property type="term" value="P:spermidine biosynthetic process"/>
    <property type="evidence" value="ECO:0007669"/>
    <property type="project" value="UniProtKB-UniRule"/>
</dbReference>
<dbReference type="FunFam" id="3.60.90.10:FF:000001">
    <property type="entry name" value="S-adenosylmethionine decarboxylase proenzyme"/>
    <property type="match status" value="1"/>
</dbReference>
<dbReference type="Gene3D" id="3.60.90.10">
    <property type="entry name" value="S-adenosylmethionine decarboxylase"/>
    <property type="match status" value="1"/>
</dbReference>
<dbReference type="HAMAP" id="MF_00465">
    <property type="entry name" value="AdoMetDC_2"/>
    <property type="match status" value="1"/>
</dbReference>
<dbReference type="InterPro" id="IPR003826">
    <property type="entry name" value="AdoMetDC_fam_prok"/>
</dbReference>
<dbReference type="InterPro" id="IPR009165">
    <property type="entry name" value="S-AdoMet_deCO2ase_bac"/>
</dbReference>
<dbReference type="InterPro" id="IPR016067">
    <property type="entry name" value="S-AdoMet_deCO2ase_core"/>
</dbReference>
<dbReference type="NCBIfam" id="TIGR03331">
    <property type="entry name" value="SAM_DCase_Eco"/>
    <property type="match status" value="1"/>
</dbReference>
<dbReference type="PANTHER" id="PTHR33866">
    <property type="entry name" value="S-ADENOSYLMETHIONINE DECARBOXYLASE PROENZYME"/>
    <property type="match status" value="1"/>
</dbReference>
<dbReference type="PANTHER" id="PTHR33866:SF1">
    <property type="entry name" value="S-ADENOSYLMETHIONINE DECARBOXYLASE PROENZYME"/>
    <property type="match status" value="1"/>
</dbReference>
<dbReference type="Pfam" id="PF02675">
    <property type="entry name" value="AdoMet_dc"/>
    <property type="match status" value="1"/>
</dbReference>
<dbReference type="PIRSF" id="PIRSF001356">
    <property type="entry name" value="SAM_decarboxylas"/>
    <property type="match status" value="1"/>
</dbReference>
<dbReference type="SUPFAM" id="SSF56276">
    <property type="entry name" value="S-adenosylmethionine decarboxylase"/>
    <property type="match status" value="1"/>
</dbReference>
<feature type="chain" id="PRO_0000030051" description="S-adenosylmethionine decarboxylase beta chain" evidence="1">
    <location>
        <begin position="1"/>
        <end position="111"/>
    </location>
</feature>
<feature type="chain" id="PRO_0000030052" description="S-adenosylmethionine decarboxylase alpha chain" evidence="1">
    <location>
        <begin position="112"/>
        <end position="264"/>
    </location>
</feature>
<feature type="active site" description="Schiff-base intermediate with substrate; via pyruvic acid" evidence="1">
    <location>
        <position position="112"/>
    </location>
</feature>
<feature type="active site" description="Proton acceptor; for processing activity" evidence="1">
    <location>
        <position position="117"/>
    </location>
</feature>
<feature type="active site" description="Proton donor; for catalytic activity" evidence="1">
    <location>
        <position position="140"/>
    </location>
</feature>
<feature type="site" description="Cleavage (non-hydrolytic); by autolysis" evidence="1">
    <location>
        <begin position="111"/>
        <end position="112"/>
    </location>
</feature>
<feature type="modified residue" description="Pyruvic acid (Ser); by autocatalysis" evidence="1">
    <location>
        <position position="112"/>
    </location>
</feature>
<organism>
    <name type="scientific">Photorhabdus laumondii subsp. laumondii (strain DSM 15139 / CIP 105565 / TT01)</name>
    <name type="common">Photorhabdus luminescens subsp. laumondii</name>
    <dbReference type="NCBI Taxonomy" id="243265"/>
    <lineage>
        <taxon>Bacteria</taxon>
        <taxon>Pseudomonadati</taxon>
        <taxon>Pseudomonadota</taxon>
        <taxon>Gammaproteobacteria</taxon>
        <taxon>Enterobacterales</taxon>
        <taxon>Morganellaceae</taxon>
        <taxon>Photorhabdus</taxon>
    </lineage>
</organism>
<gene>
    <name evidence="1" type="primary">speD</name>
    <name type="ordered locus">plu0842</name>
</gene>